<evidence type="ECO:0000255" key="1">
    <source>
        <dbReference type="HAMAP-Rule" id="MF_00639"/>
    </source>
</evidence>
<dbReference type="EC" id="6.3.2.9" evidence="1"/>
<dbReference type="EMBL" id="CP000088">
    <property type="protein sequence ID" value="AAZ55146.1"/>
    <property type="molecule type" value="Genomic_DNA"/>
</dbReference>
<dbReference type="SMR" id="Q47QX1"/>
<dbReference type="STRING" id="269800.Tfu_1108"/>
<dbReference type="KEGG" id="tfu:Tfu_1108"/>
<dbReference type="eggNOG" id="COG0771">
    <property type="taxonomic scope" value="Bacteria"/>
</dbReference>
<dbReference type="HOGENOM" id="CLU_032540_0_0_11"/>
<dbReference type="OrthoDB" id="9809796at2"/>
<dbReference type="UniPathway" id="UPA00219"/>
<dbReference type="GO" id="GO:0005737">
    <property type="term" value="C:cytoplasm"/>
    <property type="evidence" value="ECO:0007669"/>
    <property type="project" value="UniProtKB-SubCell"/>
</dbReference>
<dbReference type="GO" id="GO:0005524">
    <property type="term" value="F:ATP binding"/>
    <property type="evidence" value="ECO:0007669"/>
    <property type="project" value="UniProtKB-UniRule"/>
</dbReference>
<dbReference type="GO" id="GO:0008764">
    <property type="term" value="F:UDP-N-acetylmuramoylalanine-D-glutamate ligase activity"/>
    <property type="evidence" value="ECO:0007669"/>
    <property type="project" value="UniProtKB-UniRule"/>
</dbReference>
<dbReference type="GO" id="GO:0051301">
    <property type="term" value="P:cell division"/>
    <property type="evidence" value="ECO:0007669"/>
    <property type="project" value="UniProtKB-KW"/>
</dbReference>
<dbReference type="GO" id="GO:0071555">
    <property type="term" value="P:cell wall organization"/>
    <property type="evidence" value="ECO:0007669"/>
    <property type="project" value="UniProtKB-KW"/>
</dbReference>
<dbReference type="GO" id="GO:0009252">
    <property type="term" value="P:peptidoglycan biosynthetic process"/>
    <property type="evidence" value="ECO:0007669"/>
    <property type="project" value="UniProtKB-UniRule"/>
</dbReference>
<dbReference type="GO" id="GO:0008360">
    <property type="term" value="P:regulation of cell shape"/>
    <property type="evidence" value="ECO:0007669"/>
    <property type="project" value="UniProtKB-KW"/>
</dbReference>
<dbReference type="Gene3D" id="3.90.190.20">
    <property type="entry name" value="Mur ligase, C-terminal domain"/>
    <property type="match status" value="1"/>
</dbReference>
<dbReference type="Gene3D" id="3.40.1190.10">
    <property type="entry name" value="Mur-like, catalytic domain"/>
    <property type="match status" value="1"/>
</dbReference>
<dbReference type="Gene3D" id="3.40.50.720">
    <property type="entry name" value="NAD(P)-binding Rossmann-like Domain"/>
    <property type="match status" value="1"/>
</dbReference>
<dbReference type="HAMAP" id="MF_00639">
    <property type="entry name" value="MurD"/>
    <property type="match status" value="1"/>
</dbReference>
<dbReference type="InterPro" id="IPR036565">
    <property type="entry name" value="Mur-like_cat_sf"/>
</dbReference>
<dbReference type="InterPro" id="IPR004101">
    <property type="entry name" value="Mur_ligase_C"/>
</dbReference>
<dbReference type="InterPro" id="IPR036615">
    <property type="entry name" value="Mur_ligase_C_dom_sf"/>
</dbReference>
<dbReference type="InterPro" id="IPR013221">
    <property type="entry name" value="Mur_ligase_cen"/>
</dbReference>
<dbReference type="InterPro" id="IPR005762">
    <property type="entry name" value="MurD"/>
</dbReference>
<dbReference type="NCBIfam" id="TIGR01087">
    <property type="entry name" value="murD"/>
    <property type="match status" value="1"/>
</dbReference>
<dbReference type="PANTHER" id="PTHR43692">
    <property type="entry name" value="UDP-N-ACETYLMURAMOYLALANINE--D-GLUTAMATE LIGASE"/>
    <property type="match status" value="1"/>
</dbReference>
<dbReference type="PANTHER" id="PTHR43692:SF1">
    <property type="entry name" value="UDP-N-ACETYLMURAMOYLALANINE--D-GLUTAMATE LIGASE"/>
    <property type="match status" value="1"/>
</dbReference>
<dbReference type="Pfam" id="PF02875">
    <property type="entry name" value="Mur_ligase_C"/>
    <property type="match status" value="1"/>
</dbReference>
<dbReference type="Pfam" id="PF08245">
    <property type="entry name" value="Mur_ligase_M"/>
    <property type="match status" value="1"/>
</dbReference>
<dbReference type="Pfam" id="PF21799">
    <property type="entry name" value="MurD-like_N"/>
    <property type="match status" value="1"/>
</dbReference>
<dbReference type="SUPFAM" id="SSF51984">
    <property type="entry name" value="MurCD N-terminal domain"/>
    <property type="match status" value="1"/>
</dbReference>
<dbReference type="SUPFAM" id="SSF53623">
    <property type="entry name" value="MurD-like peptide ligases, catalytic domain"/>
    <property type="match status" value="1"/>
</dbReference>
<dbReference type="SUPFAM" id="SSF53244">
    <property type="entry name" value="MurD-like peptide ligases, peptide-binding domain"/>
    <property type="match status" value="1"/>
</dbReference>
<protein>
    <recommendedName>
        <fullName evidence="1">UDP-N-acetylmuramoylalanine--D-glutamate ligase</fullName>
        <ecNumber evidence="1">6.3.2.9</ecNumber>
    </recommendedName>
    <alternativeName>
        <fullName evidence="1">D-glutamic acid-adding enzyme</fullName>
    </alternativeName>
    <alternativeName>
        <fullName evidence="1">UDP-N-acetylmuramoyl-L-alanyl-D-glutamate synthetase</fullName>
    </alternativeName>
</protein>
<reference key="1">
    <citation type="journal article" date="2007" name="J. Bacteriol.">
        <title>Genome sequence and analysis of the soil cellulolytic actinomycete Thermobifida fusca YX.</title>
        <authorList>
            <person name="Lykidis A."/>
            <person name="Mavromatis K."/>
            <person name="Ivanova N."/>
            <person name="Anderson I."/>
            <person name="Land M."/>
            <person name="DiBartolo G."/>
            <person name="Martinez M."/>
            <person name="Lapidus A."/>
            <person name="Lucas S."/>
            <person name="Copeland A."/>
            <person name="Richardson P."/>
            <person name="Wilson D.B."/>
            <person name="Kyrpides N."/>
        </authorList>
    </citation>
    <scope>NUCLEOTIDE SEQUENCE [LARGE SCALE GENOMIC DNA]</scope>
    <source>
        <strain>YX</strain>
    </source>
</reference>
<proteinExistence type="inferred from homology"/>
<feature type="chain" id="PRO_0000257258" description="UDP-N-acetylmuramoylalanine--D-glutamate ligase">
    <location>
        <begin position="1"/>
        <end position="465"/>
    </location>
</feature>
<feature type="binding site" evidence="1">
    <location>
        <begin position="116"/>
        <end position="122"/>
    </location>
    <ligand>
        <name>ATP</name>
        <dbReference type="ChEBI" id="CHEBI:30616"/>
    </ligand>
</feature>
<keyword id="KW-0067">ATP-binding</keyword>
<keyword id="KW-0131">Cell cycle</keyword>
<keyword id="KW-0132">Cell division</keyword>
<keyword id="KW-0133">Cell shape</keyword>
<keyword id="KW-0961">Cell wall biogenesis/degradation</keyword>
<keyword id="KW-0963">Cytoplasm</keyword>
<keyword id="KW-0436">Ligase</keyword>
<keyword id="KW-0547">Nucleotide-binding</keyword>
<keyword id="KW-0573">Peptidoglycan synthesis</keyword>
<sequence length="465" mass="48595">MELRGRRVCVTGLGVSGPPVARALLKHGAHVTVVEGRDDDVNRERARTLRELGATVELGEPTTLPAGTDLVVTSPGWRPDAPVLVAAADAGVEVIGDVELAWRLRPAGQVWLAVTGTNGKTTTVRMLEAMLRADGRRALAVGNVGTPVIDAALADGPDRWDILAVELSSFQLHWSATVQPHAAAIINLAPDHLDWHGGMEPYAAAKAKVYGAGTIRIVNAADPALRELAETHGDPAAPLVGFSLDVPRAGELGLVEDLLVDRAFVANPRTEATELATLADVTPRAPHNVANALAAAALARSIGVAPEAVRTGLRNFQPEPHRIAHVATIDGVDYVDDSKATNAHAAAASLAAYPSVVWIAGGLLKGADVTGLVRQAASRLRGVVLLGADRHQLREALDTHAPHVPVVDVARTDEGAMAEVVAAAARLAQKGDTVLLAPAAASMDMFTNYIERGEAFAREVRALAG</sequence>
<gene>
    <name evidence="1" type="primary">murD</name>
    <name type="ordered locus">Tfu_1108</name>
</gene>
<name>MURD_THEFY</name>
<comment type="function">
    <text evidence="1">Cell wall formation. Catalyzes the addition of glutamate to the nucleotide precursor UDP-N-acetylmuramoyl-L-alanine (UMA).</text>
</comment>
<comment type="catalytic activity">
    <reaction evidence="1">
        <text>UDP-N-acetyl-alpha-D-muramoyl-L-alanine + D-glutamate + ATP = UDP-N-acetyl-alpha-D-muramoyl-L-alanyl-D-glutamate + ADP + phosphate + H(+)</text>
        <dbReference type="Rhea" id="RHEA:16429"/>
        <dbReference type="ChEBI" id="CHEBI:15378"/>
        <dbReference type="ChEBI" id="CHEBI:29986"/>
        <dbReference type="ChEBI" id="CHEBI:30616"/>
        <dbReference type="ChEBI" id="CHEBI:43474"/>
        <dbReference type="ChEBI" id="CHEBI:83898"/>
        <dbReference type="ChEBI" id="CHEBI:83900"/>
        <dbReference type="ChEBI" id="CHEBI:456216"/>
        <dbReference type="EC" id="6.3.2.9"/>
    </reaction>
</comment>
<comment type="pathway">
    <text evidence="1">Cell wall biogenesis; peptidoglycan biosynthesis.</text>
</comment>
<comment type="subcellular location">
    <subcellularLocation>
        <location evidence="1">Cytoplasm</location>
    </subcellularLocation>
</comment>
<comment type="similarity">
    <text evidence="1">Belongs to the MurCDEF family.</text>
</comment>
<organism>
    <name type="scientific">Thermobifida fusca (strain YX)</name>
    <dbReference type="NCBI Taxonomy" id="269800"/>
    <lineage>
        <taxon>Bacteria</taxon>
        <taxon>Bacillati</taxon>
        <taxon>Actinomycetota</taxon>
        <taxon>Actinomycetes</taxon>
        <taxon>Streptosporangiales</taxon>
        <taxon>Nocardiopsidaceae</taxon>
        <taxon>Thermobifida</taxon>
    </lineage>
</organism>
<accession>Q47QX1</accession>